<accession>B0BSX2</accession>
<keyword id="KW-0030">Aminoacyl-tRNA synthetase</keyword>
<keyword id="KW-0067">ATP-binding</keyword>
<keyword id="KW-0963">Cytoplasm</keyword>
<keyword id="KW-0436">Ligase</keyword>
<keyword id="KW-0547">Nucleotide-binding</keyword>
<keyword id="KW-0648">Protein biosynthesis</keyword>
<reference key="1">
    <citation type="journal article" date="2008" name="PLoS ONE">
        <title>Genome biology of Actinobacillus pleuropneumoniae JL03, an isolate of serotype 3 prevalent in China.</title>
        <authorList>
            <person name="Xu Z."/>
            <person name="Zhou Y."/>
            <person name="Li L."/>
            <person name="Zhou R."/>
            <person name="Xiao S."/>
            <person name="Wan Y."/>
            <person name="Zhang S."/>
            <person name="Wang K."/>
            <person name="Li W."/>
            <person name="Li L."/>
            <person name="Jin H."/>
            <person name="Kang M."/>
            <person name="Dalai B."/>
            <person name="Li T."/>
            <person name="Liu L."/>
            <person name="Cheng Y."/>
            <person name="Zhang L."/>
            <person name="Xu T."/>
            <person name="Zheng H."/>
            <person name="Pu S."/>
            <person name="Wang B."/>
            <person name="Gu W."/>
            <person name="Zhang X.L."/>
            <person name="Zhu G.-F."/>
            <person name="Wang S."/>
            <person name="Zhao G.-P."/>
            <person name="Chen H."/>
        </authorList>
    </citation>
    <scope>NUCLEOTIDE SEQUENCE [LARGE SCALE GENOMIC DNA]</scope>
    <source>
        <strain>JL03</strain>
    </source>
</reference>
<gene>
    <name evidence="1" type="primary">glyQ</name>
    <name type="ordered locus">APJL_1836</name>
</gene>
<dbReference type="EC" id="6.1.1.14" evidence="1"/>
<dbReference type="EMBL" id="CP000687">
    <property type="protein sequence ID" value="ABY70386.1"/>
    <property type="molecule type" value="Genomic_DNA"/>
</dbReference>
<dbReference type="RefSeq" id="WP_005602638.1">
    <property type="nucleotide sequence ID" value="NC_010278.1"/>
</dbReference>
<dbReference type="SMR" id="B0BSX2"/>
<dbReference type="GeneID" id="48600093"/>
<dbReference type="KEGG" id="apj:APJL_1836"/>
<dbReference type="HOGENOM" id="CLU_057066_1_0_6"/>
<dbReference type="Proteomes" id="UP000008547">
    <property type="component" value="Chromosome"/>
</dbReference>
<dbReference type="GO" id="GO:0005829">
    <property type="term" value="C:cytosol"/>
    <property type="evidence" value="ECO:0007669"/>
    <property type="project" value="TreeGrafter"/>
</dbReference>
<dbReference type="GO" id="GO:0005524">
    <property type="term" value="F:ATP binding"/>
    <property type="evidence" value="ECO:0007669"/>
    <property type="project" value="UniProtKB-UniRule"/>
</dbReference>
<dbReference type="GO" id="GO:0004820">
    <property type="term" value="F:glycine-tRNA ligase activity"/>
    <property type="evidence" value="ECO:0007669"/>
    <property type="project" value="UniProtKB-UniRule"/>
</dbReference>
<dbReference type="GO" id="GO:0006426">
    <property type="term" value="P:glycyl-tRNA aminoacylation"/>
    <property type="evidence" value="ECO:0007669"/>
    <property type="project" value="UniProtKB-UniRule"/>
</dbReference>
<dbReference type="CDD" id="cd00733">
    <property type="entry name" value="GlyRS_alpha_core"/>
    <property type="match status" value="1"/>
</dbReference>
<dbReference type="FunFam" id="1.20.58.180:FF:000001">
    <property type="entry name" value="Glycine--tRNA ligase alpha subunit"/>
    <property type="match status" value="1"/>
</dbReference>
<dbReference type="FunFam" id="3.30.930.10:FF:000006">
    <property type="entry name" value="Glycine--tRNA ligase alpha subunit"/>
    <property type="match status" value="1"/>
</dbReference>
<dbReference type="Gene3D" id="3.30.930.10">
    <property type="entry name" value="Bira Bifunctional Protein, Domain 2"/>
    <property type="match status" value="1"/>
</dbReference>
<dbReference type="Gene3D" id="1.20.58.180">
    <property type="entry name" value="Class II aaRS and biotin synthetases, domain 2"/>
    <property type="match status" value="1"/>
</dbReference>
<dbReference type="HAMAP" id="MF_00254">
    <property type="entry name" value="Gly_tRNA_synth_alpha"/>
    <property type="match status" value="1"/>
</dbReference>
<dbReference type="InterPro" id="IPR045864">
    <property type="entry name" value="aa-tRNA-synth_II/BPL/LPL"/>
</dbReference>
<dbReference type="InterPro" id="IPR006194">
    <property type="entry name" value="Gly-tRNA-synth_heterodimer"/>
</dbReference>
<dbReference type="InterPro" id="IPR002310">
    <property type="entry name" value="Gly-tRNA_ligase_asu"/>
</dbReference>
<dbReference type="NCBIfam" id="TIGR00388">
    <property type="entry name" value="glyQ"/>
    <property type="match status" value="1"/>
</dbReference>
<dbReference type="NCBIfam" id="NF006827">
    <property type="entry name" value="PRK09348.1"/>
    <property type="match status" value="1"/>
</dbReference>
<dbReference type="PANTHER" id="PTHR30075:SF2">
    <property type="entry name" value="GLYCINE--TRNA LIGASE, CHLOROPLASTIC_MITOCHONDRIAL 2"/>
    <property type="match status" value="1"/>
</dbReference>
<dbReference type="PANTHER" id="PTHR30075">
    <property type="entry name" value="GLYCYL-TRNA SYNTHETASE"/>
    <property type="match status" value="1"/>
</dbReference>
<dbReference type="Pfam" id="PF02091">
    <property type="entry name" value="tRNA-synt_2e"/>
    <property type="match status" value="1"/>
</dbReference>
<dbReference type="PRINTS" id="PR01044">
    <property type="entry name" value="TRNASYNTHGA"/>
</dbReference>
<dbReference type="SUPFAM" id="SSF55681">
    <property type="entry name" value="Class II aaRS and biotin synthetases"/>
    <property type="match status" value="1"/>
</dbReference>
<dbReference type="PROSITE" id="PS50861">
    <property type="entry name" value="AA_TRNA_LIGASE_II_GLYAB"/>
    <property type="match status" value="1"/>
</dbReference>
<name>SYGA_ACTPJ</name>
<feature type="chain" id="PRO_1000101172" description="Glycine--tRNA ligase alpha subunit">
    <location>
        <begin position="1"/>
        <end position="304"/>
    </location>
</feature>
<protein>
    <recommendedName>
        <fullName evidence="1">Glycine--tRNA ligase alpha subunit</fullName>
        <ecNumber evidence="1">6.1.1.14</ecNumber>
    </recommendedName>
    <alternativeName>
        <fullName evidence="1">Glycyl-tRNA synthetase alpha subunit</fullName>
        <shortName evidence="1">GlyRS</shortName>
    </alternativeName>
</protein>
<evidence type="ECO:0000255" key="1">
    <source>
        <dbReference type="HAMAP-Rule" id="MF_00254"/>
    </source>
</evidence>
<proteinExistence type="inferred from homology"/>
<comment type="catalytic activity">
    <reaction evidence="1">
        <text>tRNA(Gly) + glycine + ATP = glycyl-tRNA(Gly) + AMP + diphosphate</text>
        <dbReference type="Rhea" id="RHEA:16013"/>
        <dbReference type="Rhea" id="RHEA-COMP:9664"/>
        <dbReference type="Rhea" id="RHEA-COMP:9683"/>
        <dbReference type="ChEBI" id="CHEBI:30616"/>
        <dbReference type="ChEBI" id="CHEBI:33019"/>
        <dbReference type="ChEBI" id="CHEBI:57305"/>
        <dbReference type="ChEBI" id="CHEBI:78442"/>
        <dbReference type="ChEBI" id="CHEBI:78522"/>
        <dbReference type="ChEBI" id="CHEBI:456215"/>
        <dbReference type="EC" id="6.1.1.14"/>
    </reaction>
</comment>
<comment type="subunit">
    <text evidence="1">Tetramer of two alpha and two beta subunits.</text>
</comment>
<comment type="subcellular location">
    <subcellularLocation>
        <location evidence="1">Cytoplasm</location>
    </subcellularLocation>
</comment>
<comment type="similarity">
    <text evidence="1">Belongs to the class-II aminoacyl-tRNA synthetase family.</text>
</comment>
<sequence length="304" mass="34670">MTTKFNVKTFQGMILALQDYWANVGCTIVQPFDMEVGAGTSHPMTALRALGPEPMAFAYVQPSRRPTDGRYGENPNRLQHYYQFQVVIKPSPDNIQELYLGSLKMLGFDPTQHDIRFVEDNWENPTLGAWGLGWEVWLNGMEVTQFTYFQQVGGLECKPVTGEVTYGLERLAMYIQGVDSVYDLVWSDGPLGKTTYGDVFHQNEVEQSTYNFEYADVDFLFKAFEQYEKEATELLALEKPLPLPAYERILKAAHSFNMLDARKAISVTERQRYILRIRTLTKGVAEAYYASREALGFPGCNKQV</sequence>
<organism>
    <name type="scientific">Actinobacillus pleuropneumoniae serotype 3 (strain JL03)</name>
    <dbReference type="NCBI Taxonomy" id="434271"/>
    <lineage>
        <taxon>Bacteria</taxon>
        <taxon>Pseudomonadati</taxon>
        <taxon>Pseudomonadota</taxon>
        <taxon>Gammaproteobacteria</taxon>
        <taxon>Pasteurellales</taxon>
        <taxon>Pasteurellaceae</taxon>
        <taxon>Actinobacillus</taxon>
    </lineage>
</organism>